<proteinExistence type="inferred from homology"/>
<keyword id="KW-0407">Ion channel</keyword>
<keyword id="KW-0406">Ion transport</keyword>
<keyword id="KW-0472">Membrane</keyword>
<keyword id="KW-1185">Reference proteome</keyword>
<keyword id="KW-0812">Transmembrane</keyword>
<keyword id="KW-1133">Transmembrane helix</keyword>
<keyword id="KW-0813">Transport</keyword>
<sequence length="593" mass="67584">MFFYSPNVASSSSASHRRGTLTHQHHLHVGHLDTRLSVQIPEILSRNFGHHDPERARLVPEHLRFLVDENQELWTGGNQPPVGILELCAASPVDSVFSTNDARRHSQRKLILRRPTISIQEDGKIIIDHVTARWEGANINSQSALLDADDGATVITDTIKDDQEDKEPKSCPQQTVKYIKILLPHVILVSVLIGYLCLGAWILMLLETRTELLSRSKKLVRLTNLMSNFTAESWRMLSDAQHGSITMDEGEWAATFREWMVRVSETVDDRRPIRRELNRPDDLSNMHNKWTFPTALLYVLTVLTTCGYGEVSVDTDVGKVFSVAFALVGIPLMFITAADIGKFLSETLLKFVSFWNRSVRKVKQWMSRVRHGRRKSLQSTGGQNDTLDILGVDGTEEKLWFPIGAYVSCICLYCSMGSAMFINWERTWSFIHAFHFGFNLIVTVGLGDIVVTDYIFLSLIVAFVIVGLSVVTMCVDLASTHLKAYFTRIHYFGRAKRFLGMSEELKEIVALLGAMRRKKGGKVTWNDVRDFLDNELRDRPFEPHELLMKLRFIDETSSGMSTIRHNSFQSDFFRESEYIRRVAALRPEQPAYL</sequence>
<organism>
    <name type="scientific">Caenorhabditis briggsae</name>
    <dbReference type="NCBI Taxonomy" id="6238"/>
    <lineage>
        <taxon>Eukaryota</taxon>
        <taxon>Metazoa</taxon>
        <taxon>Ecdysozoa</taxon>
        <taxon>Nematoda</taxon>
        <taxon>Chromadorea</taxon>
        <taxon>Rhabditida</taxon>
        <taxon>Rhabditina</taxon>
        <taxon>Rhabditomorpha</taxon>
        <taxon>Rhabditoidea</taxon>
        <taxon>Rhabditidae</taxon>
        <taxon>Peloderinae</taxon>
        <taxon>Caenorhabditis</taxon>
    </lineage>
</organism>
<dbReference type="EMBL" id="HE601451">
    <property type="protein sequence ID" value="CAP23166.2"/>
    <property type="molecule type" value="Genomic_DNA"/>
</dbReference>
<dbReference type="STRING" id="6238.Q622X0"/>
<dbReference type="WormBase" id="CBG01980a">
    <property type="protein sequence ID" value="CBP46739"/>
    <property type="gene ID" value="WBGene00025136"/>
    <property type="gene designation" value="Cbr-unc-58"/>
</dbReference>
<dbReference type="eggNOG" id="KOG1418">
    <property type="taxonomic scope" value="Eukaryota"/>
</dbReference>
<dbReference type="HOGENOM" id="CLU_032755_1_0_1"/>
<dbReference type="InParanoid" id="Q622X0"/>
<dbReference type="OMA" id="VSCICLY"/>
<dbReference type="OrthoDB" id="5916454at2759"/>
<dbReference type="Proteomes" id="UP000008549">
    <property type="component" value="Unassembled WGS sequence"/>
</dbReference>
<dbReference type="GO" id="GO:0005886">
    <property type="term" value="C:plasma membrane"/>
    <property type="evidence" value="ECO:0000318"/>
    <property type="project" value="GO_Central"/>
</dbReference>
<dbReference type="GO" id="GO:0015271">
    <property type="term" value="F:outward rectifier potassium channel activity"/>
    <property type="evidence" value="ECO:0000318"/>
    <property type="project" value="GO_Central"/>
</dbReference>
<dbReference type="GO" id="GO:0022841">
    <property type="term" value="F:potassium ion leak channel activity"/>
    <property type="evidence" value="ECO:0000318"/>
    <property type="project" value="GO_Central"/>
</dbReference>
<dbReference type="GO" id="GO:0040011">
    <property type="term" value="P:locomotion"/>
    <property type="evidence" value="ECO:0000250"/>
    <property type="project" value="UniProtKB"/>
</dbReference>
<dbReference type="GO" id="GO:0006936">
    <property type="term" value="P:muscle contraction"/>
    <property type="evidence" value="ECO:0000250"/>
    <property type="project" value="UniProtKB"/>
</dbReference>
<dbReference type="GO" id="GO:0007567">
    <property type="term" value="P:parturition"/>
    <property type="evidence" value="ECO:0000250"/>
    <property type="project" value="UniProtKB"/>
</dbReference>
<dbReference type="GO" id="GO:0071805">
    <property type="term" value="P:potassium ion transmembrane transport"/>
    <property type="evidence" value="ECO:0000318"/>
    <property type="project" value="GO_Central"/>
</dbReference>
<dbReference type="Gene3D" id="1.10.287.70">
    <property type="match status" value="1"/>
</dbReference>
<dbReference type="InterPro" id="IPR003280">
    <property type="entry name" value="2pore_dom_K_chnl"/>
</dbReference>
<dbReference type="InterPro" id="IPR013099">
    <property type="entry name" value="K_chnl_dom"/>
</dbReference>
<dbReference type="PANTHER" id="PTHR11003">
    <property type="entry name" value="POTASSIUM CHANNEL, SUBFAMILY K"/>
    <property type="match status" value="1"/>
</dbReference>
<dbReference type="PANTHER" id="PTHR11003:SF310">
    <property type="entry name" value="UNCOORDINATED PROTEIN 58"/>
    <property type="match status" value="1"/>
</dbReference>
<dbReference type="Pfam" id="PF07885">
    <property type="entry name" value="Ion_trans_2"/>
    <property type="match status" value="2"/>
</dbReference>
<dbReference type="PRINTS" id="PR01333">
    <property type="entry name" value="2POREKCHANEL"/>
</dbReference>
<dbReference type="SUPFAM" id="SSF81324">
    <property type="entry name" value="Voltage-gated potassium channels"/>
    <property type="match status" value="2"/>
</dbReference>
<comment type="function">
    <text evidence="1">Has a role in mobility, possibly in the transport of potassium in muscles.</text>
</comment>
<comment type="subcellular location">
    <subcellularLocation>
        <location evidence="2">Membrane</location>
        <topology evidence="2">Multi-pass membrane protein</topology>
    </subcellularLocation>
</comment>
<comment type="similarity">
    <text evidence="2">Belongs to the two pore domain potassium channel (TC 1.A.1.8) family.</text>
</comment>
<name>UNC58_CAEBR</name>
<protein>
    <recommendedName>
        <fullName>Uncoordinated protein 58</fullName>
    </recommendedName>
</protein>
<reference key="1">
    <citation type="journal article" date="2003" name="PLoS Biol.">
        <title>The genome sequence of Caenorhabditis briggsae: a platform for comparative genomics.</title>
        <authorList>
            <person name="Stein L.D."/>
            <person name="Bao Z."/>
            <person name="Blasiar D."/>
            <person name="Blumenthal T."/>
            <person name="Brent M.R."/>
            <person name="Chen N."/>
            <person name="Chinwalla A."/>
            <person name="Clarke L."/>
            <person name="Clee C."/>
            <person name="Coghlan A."/>
            <person name="Coulson A."/>
            <person name="D'Eustachio P."/>
            <person name="Fitch D.H.A."/>
            <person name="Fulton L.A."/>
            <person name="Fulton R.E."/>
            <person name="Griffiths-Jones S."/>
            <person name="Harris T.W."/>
            <person name="Hillier L.W."/>
            <person name="Kamath R."/>
            <person name="Kuwabara P.E."/>
            <person name="Mardis E.R."/>
            <person name="Marra M.A."/>
            <person name="Miner T.L."/>
            <person name="Minx P."/>
            <person name="Mullikin J.C."/>
            <person name="Plumb R.W."/>
            <person name="Rogers J."/>
            <person name="Schein J.E."/>
            <person name="Sohrmann M."/>
            <person name="Spieth J."/>
            <person name="Stajich J.E."/>
            <person name="Wei C."/>
            <person name="Willey D."/>
            <person name="Wilson R.K."/>
            <person name="Durbin R.M."/>
            <person name="Waterston R.H."/>
        </authorList>
    </citation>
    <scope>NUCLEOTIDE SEQUENCE [LARGE SCALE GENOMIC DNA]</scope>
    <source>
        <strain>AF16</strain>
    </source>
</reference>
<evidence type="ECO:0000250" key="1">
    <source>
        <dbReference type="UniProtKB" id="Q22271"/>
    </source>
</evidence>
<evidence type="ECO:0000255" key="2"/>
<gene>
    <name evidence="1" type="primary">unc-58</name>
    <name type="ORF">CBG01980</name>
</gene>
<feature type="chain" id="PRO_0000306198" description="Uncoordinated protein 58">
    <location>
        <begin position="1"/>
        <end position="593"/>
    </location>
</feature>
<feature type="transmembrane region" description="Helical" evidence="2">
    <location>
        <begin position="186"/>
        <end position="206"/>
    </location>
</feature>
<feature type="transmembrane region" description="Helical" evidence="2">
    <location>
        <begin position="291"/>
        <end position="311"/>
    </location>
</feature>
<feature type="transmembrane region" description="Helical" evidence="2">
    <location>
        <begin position="320"/>
        <end position="340"/>
    </location>
</feature>
<feature type="transmembrane region" description="Helical" evidence="2">
    <location>
        <begin position="402"/>
        <end position="422"/>
    </location>
</feature>
<feature type="transmembrane region" description="Helical" evidence="2">
    <location>
        <begin position="430"/>
        <end position="450"/>
    </location>
</feature>
<feature type="transmembrane region" description="Helical" evidence="2">
    <location>
        <begin position="455"/>
        <end position="475"/>
    </location>
</feature>
<accession>Q622X0</accession>
<accession>A8WRQ8</accession>